<reference key="1">
    <citation type="journal article" date="1987" name="FEBS Lett.">
        <title>Splicing of group II introns in mRNAs coding for cytochrome b6 and subunit IV in the liverwort Marchantia polymorpha chloroplast genome. Exon specifying a region coding for two genes with the spacer region.</title>
        <authorList>
            <person name="Fukuzawa H."/>
            <person name="Yoshida T."/>
            <person name="Kohchi T."/>
            <person name="Okumura T."/>
            <person name="Sawano Y."/>
            <person name="Ohyama K."/>
        </authorList>
    </citation>
    <scope>NUCLEOTIDE SEQUENCE [GENOMIC DNA]</scope>
</reference>
<reference key="2">
    <citation type="journal article" date="1988" name="J. Mol. Biol.">
        <title>Structure and organization of Marchantia polymorpha chloroplast genome. III. Gene organization of the large single copy region from rbcL to trnI(CAU).</title>
        <authorList>
            <person name="Fukuzawa H."/>
            <person name="Kohchi T."/>
            <person name="Sano T."/>
            <person name="Shirai H."/>
            <person name="Umesono K."/>
            <person name="Inokuchi H."/>
            <person name="Ozeki H."/>
            <person name="Ohyama K."/>
        </authorList>
    </citation>
    <scope>NUCLEOTIDE SEQUENCE [GENOMIC DNA]</scope>
</reference>
<reference key="3">
    <citation type="journal article" date="1986" name="Nature">
        <title>Chloroplast gene organization deduced from complete sequence of liverwort Marchantia polymorpha chloroplast DNA.</title>
        <authorList>
            <person name="Ohyama K."/>
            <person name="Fukuzawa H."/>
            <person name="Kohchi T."/>
            <person name="Shirai H."/>
            <person name="Sano T."/>
            <person name="Sano S."/>
            <person name="Umesono K."/>
            <person name="Shiki Y."/>
            <person name="Takeuchi M."/>
            <person name="Chang Z."/>
            <person name="Aota S."/>
            <person name="Inokuchi H."/>
            <person name="Ozeki H."/>
        </authorList>
    </citation>
    <scope>NUCLEOTIDE SEQUENCE [LARGE SCALE GENOMIC DNA]</scope>
</reference>
<proteinExistence type="inferred from homology"/>
<comment type="function">
    <text evidence="1">Component of the cytochrome b6-f complex, which mediates electron transfer between photosystem II (PSII) and photosystem I (PSI), cyclic electron flow around PSI, and state transitions.</text>
</comment>
<comment type="cofactor">
    <cofactor evidence="1">
        <name>heme b</name>
        <dbReference type="ChEBI" id="CHEBI:60344"/>
    </cofactor>
    <text evidence="1">Binds 2 heme b groups non-covalently with two histidine residues as axial ligands.</text>
</comment>
<comment type="cofactor">
    <cofactor evidence="1">
        <name>heme c</name>
        <dbReference type="ChEBI" id="CHEBI:61717"/>
    </cofactor>
    <text evidence="1">Binds one heme group covalently by a single cysteine link with no axial amino acid ligand. This heme was named heme ci.</text>
</comment>
<comment type="subunit">
    <text evidence="1">The 4 large subunits of the cytochrome b6-f complex are cytochrome b6, subunit IV (17 kDa polypeptide, PetD), cytochrome f and the Rieske protein, while the 4 small subunits are PetG, PetL, PetM and PetN. The complex functions as a dimer.</text>
</comment>
<comment type="subcellular location">
    <subcellularLocation>
        <location evidence="1">Plastid</location>
        <location evidence="1">Chloroplast thylakoid membrane</location>
        <topology evidence="1">Multi-pass membrane protein</topology>
    </subcellularLocation>
</comment>
<comment type="miscellaneous">
    <text evidence="1">Heme 1 (or BH or b566) is high-potential and absorbs at about 566 nm, and heme 2 (or BL or b562) is low-potential and absorbs at about 562 nm.</text>
</comment>
<comment type="similarity">
    <text evidence="1">Belongs to the cytochrome b family. PetB subfamily.</text>
</comment>
<geneLocation type="chloroplast"/>
<evidence type="ECO:0000255" key="1">
    <source>
        <dbReference type="HAMAP-Rule" id="MF_00633"/>
    </source>
</evidence>
<keyword id="KW-0150">Chloroplast</keyword>
<keyword id="KW-0249">Electron transport</keyword>
<keyword id="KW-0349">Heme</keyword>
<keyword id="KW-0408">Iron</keyword>
<keyword id="KW-0472">Membrane</keyword>
<keyword id="KW-0479">Metal-binding</keyword>
<keyword id="KW-0602">Photosynthesis</keyword>
<keyword id="KW-0934">Plastid</keyword>
<keyword id="KW-0793">Thylakoid</keyword>
<keyword id="KW-0812">Transmembrane</keyword>
<keyword id="KW-1133">Transmembrane helix</keyword>
<keyword id="KW-0813">Transport</keyword>
<feature type="chain" id="PRO_0000061802" description="Cytochrome b6">
    <location>
        <begin position="1"/>
        <end position="215"/>
    </location>
</feature>
<feature type="transmembrane region" description="Helical" evidence="1">
    <location>
        <begin position="32"/>
        <end position="52"/>
    </location>
</feature>
<feature type="transmembrane region" description="Helical" evidence="1">
    <location>
        <begin position="90"/>
        <end position="110"/>
    </location>
</feature>
<feature type="transmembrane region" description="Helical" evidence="1">
    <location>
        <begin position="116"/>
        <end position="136"/>
    </location>
</feature>
<feature type="transmembrane region" description="Helical" evidence="1">
    <location>
        <begin position="186"/>
        <end position="206"/>
    </location>
</feature>
<feature type="binding site" description="covalent" evidence="1">
    <location>
        <position position="35"/>
    </location>
    <ligand>
        <name>heme c</name>
        <dbReference type="ChEBI" id="CHEBI:61717"/>
    </ligand>
</feature>
<feature type="binding site" description="axial binding residue" evidence="1">
    <location>
        <position position="86"/>
    </location>
    <ligand>
        <name>heme b</name>
        <dbReference type="ChEBI" id="CHEBI:60344"/>
        <label>2</label>
    </ligand>
    <ligandPart>
        <name>Fe</name>
        <dbReference type="ChEBI" id="CHEBI:18248"/>
    </ligandPart>
</feature>
<feature type="binding site" description="axial binding residue" evidence="1">
    <location>
        <position position="100"/>
    </location>
    <ligand>
        <name>heme b</name>
        <dbReference type="ChEBI" id="CHEBI:60344"/>
        <label>1</label>
    </ligand>
    <ligandPart>
        <name>Fe</name>
        <dbReference type="ChEBI" id="CHEBI:18248"/>
    </ligandPart>
</feature>
<feature type="binding site" description="axial binding residue" evidence="1">
    <location>
        <position position="187"/>
    </location>
    <ligand>
        <name>heme b</name>
        <dbReference type="ChEBI" id="CHEBI:60344"/>
        <label>2</label>
    </ligand>
    <ligandPart>
        <name>Fe</name>
        <dbReference type="ChEBI" id="CHEBI:18248"/>
    </ligandPart>
</feature>
<feature type="binding site" description="axial binding residue" evidence="1">
    <location>
        <position position="202"/>
    </location>
    <ligand>
        <name>heme b</name>
        <dbReference type="ChEBI" id="CHEBI:60344"/>
        <label>1</label>
    </ligand>
    <ligandPart>
        <name>Fe</name>
        <dbReference type="ChEBI" id="CHEBI:18248"/>
    </ligandPart>
</feature>
<accession>P06248</accession>
<dbReference type="EMBL" id="X04465">
    <property type="protein sequence ID" value="CAA28115.1"/>
    <property type="molecule type" value="Genomic_DNA"/>
</dbReference>
<dbReference type="PIR" id="S01552">
    <property type="entry name" value="CBLV6"/>
</dbReference>
<dbReference type="RefSeq" id="NP_039329.1">
    <property type="nucleotide sequence ID" value="NC_001319.1"/>
</dbReference>
<dbReference type="SMR" id="P06248"/>
<dbReference type="GeneID" id="2702562"/>
<dbReference type="GO" id="GO:0009535">
    <property type="term" value="C:chloroplast thylakoid membrane"/>
    <property type="evidence" value="ECO:0007669"/>
    <property type="project" value="UniProtKB-SubCell"/>
</dbReference>
<dbReference type="GO" id="GO:0045158">
    <property type="term" value="F:electron transporter, transferring electrons within cytochrome b6/f complex of photosystem II activity"/>
    <property type="evidence" value="ECO:0007669"/>
    <property type="project" value="UniProtKB-UniRule"/>
</dbReference>
<dbReference type="GO" id="GO:0046872">
    <property type="term" value="F:metal ion binding"/>
    <property type="evidence" value="ECO:0007669"/>
    <property type="project" value="UniProtKB-KW"/>
</dbReference>
<dbReference type="GO" id="GO:0016491">
    <property type="term" value="F:oxidoreductase activity"/>
    <property type="evidence" value="ECO:0007669"/>
    <property type="project" value="InterPro"/>
</dbReference>
<dbReference type="GO" id="GO:0015979">
    <property type="term" value="P:photosynthesis"/>
    <property type="evidence" value="ECO:0007669"/>
    <property type="project" value="UniProtKB-UniRule"/>
</dbReference>
<dbReference type="GO" id="GO:0022904">
    <property type="term" value="P:respiratory electron transport chain"/>
    <property type="evidence" value="ECO:0007669"/>
    <property type="project" value="InterPro"/>
</dbReference>
<dbReference type="CDD" id="cd00284">
    <property type="entry name" value="Cytochrome_b_N"/>
    <property type="match status" value="1"/>
</dbReference>
<dbReference type="FunFam" id="1.20.810.10:FF:000001">
    <property type="entry name" value="Cytochrome b6"/>
    <property type="match status" value="1"/>
</dbReference>
<dbReference type="Gene3D" id="1.20.810.10">
    <property type="entry name" value="Cytochrome Bc1 Complex, Chain C"/>
    <property type="match status" value="1"/>
</dbReference>
<dbReference type="HAMAP" id="MF_00633">
    <property type="entry name" value="Cytb6_f_cytb6"/>
    <property type="match status" value="1"/>
</dbReference>
<dbReference type="InterPro" id="IPR005797">
    <property type="entry name" value="Cyt_b/b6_N"/>
</dbReference>
<dbReference type="InterPro" id="IPR023530">
    <property type="entry name" value="Cyt_B6_PetB"/>
</dbReference>
<dbReference type="InterPro" id="IPR027387">
    <property type="entry name" value="Cytb/b6-like_sf"/>
</dbReference>
<dbReference type="InterPro" id="IPR048259">
    <property type="entry name" value="Cytochrome_b_N_euk/bac"/>
</dbReference>
<dbReference type="InterPro" id="IPR016174">
    <property type="entry name" value="Di-haem_cyt_TM"/>
</dbReference>
<dbReference type="NCBIfam" id="NF002990">
    <property type="entry name" value="PRK03735.1"/>
    <property type="match status" value="1"/>
</dbReference>
<dbReference type="PANTHER" id="PTHR19271">
    <property type="entry name" value="CYTOCHROME B"/>
    <property type="match status" value="1"/>
</dbReference>
<dbReference type="PANTHER" id="PTHR19271:SF16">
    <property type="entry name" value="CYTOCHROME B"/>
    <property type="match status" value="1"/>
</dbReference>
<dbReference type="Pfam" id="PF00033">
    <property type="entry name" value="Cytochrome_B"/>
    <property type="match status" value="1"/>
</dbReference>
<dbReference type="PIRSF" id="PIRSF000032">
    <property type="entry name" value="Cytochrome_b6"/>
    <property type="match status" value="1"/>
</dbReference>
<dbReference type="SUPFAM" id="SSF81342">
    <property type="entry name" value="Transmembrane di-heme cytochromes"/>
    <property type="match status" value="1"/>
</dbReference>
<dbReference type="PROSITE" id="PS51002">
    <property type="entry name" value="CYTB_NTER"/>
    <property type="match status" value="1"/>
</dbReference>
<gene>
    <name evidence="1" type="primary">petB</name>
</gene>
<protein>
    <recommendedName>
        <fullName evidence="1">Cytochrome b6</fullName>
    </recommendedName>
</protein>
<organism>
    <name type="scientific">Marchantia polymorpha</name>
    <name type="common">Common liverwort</name>
    <name type="synonym">Marchantia aquatica</name>
    <dbReference type="NCBI Taxonomy" id="3197"/>
    <lineage>
        <taxon>Eukaryota</taxon>
        <taxon>Viridiplantae</taxon>
        <taxon>Streptophyta</taxon>
        <taxon>Embryophyta</taxon>
        <taxon>Marchantiophyta</taxon>
        <taxon>Marchantiopsida</taxon>
        <taxon>Marchantiidae</taxon>
        <taxon>Marchantiales</taxon>
        <taxon>Marchantiaceae</taxon>
        <taxon>Marchantia</taxon>
    </lineage>
</organism>
<sequence length="215" mass="24307">MGKVYDWFEERLEIQAIADDITSKYVPPHVNIFYCLGGITLTCFLVQVATGFAMTFYYRPTVTEAFSSVQYIMTEVNFGWLIRSVHRWSASMMVLMMILHIFRVYLTGGFKKPRELTWVTGVILAVLTVSFGVTGYSLPWDQIGYWAVKIVTGVPEAIPIIGSPLVELLRGSVSVGQSTLTRFYSLHTFVLPLLTAIFMLMHFLMIRKQGISGPL</sequence>
<name>CYB6_MARPO</name>